<protein>
    <recommendedName>
        <fullName evidence="1">Homoserine O-acetyltransferase</fullName>
        <shortName evidence="1">HAT</shortName>
        <ecNumber evidence="1">2.3.1.31</ecNumber>
    </recommendedName>
    <alternativeName>
        <fullName evidence="1">Homoserine transacetylase</fullName>
        <shortName evidence="1">HTA</shortName>
    </alternativeName>
</protein>
<gene>
    <name evidence="1" type="primary">metXA</name>
    <name type="ordered locus">NFA_9220</name>
</gene>
<proteinExistence type="inferred from homology"/>
<evidence type="ECO:0000255" key="1">
    <source>
        <dbReference type="HAMAP-Rule" id="MF_00296"/>
    </source>
</evidence>
<evidence type="ECO:0000256" key="2">
    <source>
        <dbReference type="SAM" id="MobiDB-lite"/>
    </source>
</evidence>
<evidence type="ECO:0000305" key="3"/>
<comment type="function">
    <text evidence="1">Transfers an acetyl group from acetyl-CoA to L-homoserine, forming acetyl-L-homoserine.</text>
</comment>
<comment type="catalytic activity">
    <reaction evidence="1">
        <text>L-homoserine + acetyl-CoA = O-acetyl-L-homoserine + CoA</text>
        <dbReference type="Rhea" id="RHEA:13701"/>
        <dbReference type="ChEBI" id="CHEBI:57287"/>
        <dbReference type="ChEBI" id="CHEBI:57288"/>
        <dbReference type="ChEBI" id="CHEBI:57476"/>
        <dbReference type="ChEBI" id="CHEBI:57716"/>
        <dbReference type="EC" id="2.3.1.31"/>
    </reaction>
</comment>
<comment type="pathway">
    <text evidence="1">Amino-acid biosynthesis; L-methionine biosynthesis via de novo pathway; O-acetyl-L-homoserine from L-homoserine: step 1/1.</text>
</comment>
<comment type="subunit">
    <text evidence="1">Homodimer.</text>
</comment>
<comment type="subcellular location">
    <subcellularLocation>
        <location evidence="1">Cytoplasm</location>
    </subcellularLocation>
</comment>
<comment type="similarity">
    <text evidence="1">Belongs to the AB hydrolase superfamily. MetX family.</text>
</comment>
<comment type="sequence caution" evidence="3">
    <conflict type="erroneous initiation">
        <sequence resource="EMBL-CDS" id="BAD55767"/>
    </conflict>
</comment>
<reference key="1">
    <citation type="journal article" date="2004" name="Proc. Natl. Acad. Sci. U.S.A.">
        <title>The complete genomic sequence of Nocardia farcinica IFM 10152.</title>
        <authorList>
            <person name="Ishikawa J."/>
            <person name="Yamashita A."/>
            <person name="Mikami Y."/>
            <person name="Hoshino Y."/>
            <person name="Kurita H."/>
            <person name="Hotta K."/>
            <person name="Shiba T."/>
            <person name="Hattori M."/>
        </authorList>
    </citation>
    <scope>NUCLEOTIDE SEQUENCE [LARGE SCALE GENOMIC DNA]</scope>
    <source>
        <strain>IFM 10152</strain>
    </source>
</reference>
<feature type="chain" id="PRO_0000155735" description="Homoserine O-acetyltransferase">
    <location>
        <begin position="1"/>
        <end position="382"/>
    </location>
</feature>
<feature type="domain" description="AB hydrolase-1" evidence="1">
    <location>
        <begin position="59"/>
        <end position="363"/>
    </location>
</feature>
<feature type="region of interest" description="Disordered" evidence="2">
    <location>
        <begin position="1"/>
        <end position="20"/>
    </location>
</feature>
<feature type="active site" description="Nucleophile" evidence="1">
    <location>
        <position position="164"/>
    </location>
</feature>
<feature type="active site" evidence="1">
    <location>
        <position position="327"/>
    </location>
</feature>
<feature type="active site" evidence="1">
    <location>
        <position position="357"/>
    </location>
</feature>
<feature type="binding site" evidence="1">
    <location>
        <position position="234"/>
    </location>
    <ligand>
        <name>substrate</name>
    </ligand>
</feature>
<feature type="binding site" evidence="1">
    <location>
        <position position="358"/>
    </location>
    <ligand>
        <name>substrate</name>
    </ligand>
</feature>
<keyword id="KW-0012">Acyltransferase</keyword>
<keyword id="KW-0028">Amino-acid biosynthesis</keyword>
<keyword id="KW-0963">Cytoplasm</keyword>
<keyword id="KW-0486">Methionine biosynthesis</keyword>
<keyword id="KW-1185">Reference proteome</keyword>
<keyword id="KW-0808">Transferase</keyword>
<sequence>MSTDQSPCPSATGAELLPPPDGTLAIVPVGDIRLESGAVIPDVHLGVQRWGELSPGLDNVVLVEHALTGDSHVVGPADDVHQLPGWWNGMVGPGAPMDTDEWCVIATNVLGGCKGSTGPGSTAPDGKPWGSRFPAISIRDQVTAEAALFDRIGIHRLAAVVGGSMGGMRVLEWMVGAPERVAAALVLAVGARATADQIGTQTTQIAAITADPDWQGGDYHDTGRAPTTGMGIARRIAHLTYRTEDELDHRFANHAQDGEDPFDGGRWAVQSYLEHQAEKLCRRFDPATYVLLTEAMNRHDVGRGRGGVAAALAATPVPCVVGGVDSDRLYPLHTQQELADLLPGCARLEVVHSRDGHDGFLTETAAIGKLLVETMRLARAHR</sequence>
<name>METXA_NOCFA</name>
<dbReference type="EC" id="2.3.1.31" evidence="1"/>
<dbReference type="EMBL" id="AP006618">
    <property type="protein sequence ID" value="BAD55767.1"/>
    <property type="status" value="ALT_INIT"/>
    <property type="molecule type" value="Genomic_DNA"/>
</dbReference>
<dbReference type="SMR" id="Q5Z1C4"/>
<dbReference type="STRING" id="247156.NFA_9220"/>
<dbReference type="ESTHER" id="nocfa-metx">
    <property type="family name" value="Homoserine_transacetylase"/>
</dbReference>
<dbReference type="KEGG" id="nfa:NFA_9220"/>
<dbReference type="eggNOG" id="COG2021">
    <property type="taxonomic scope" value="Bacteria"/>
</dbReference>
<dbReference type="HOGENOM" id="CLU_028760_1_0_11"/>
<dbReference type="UniPathway" id="UPA00051">
    <property type="reaction ID" value="UER00074"/>
</dbReference>
<dbReference type="Proteomes" id="UP000006820">
    <property type="component" value="Chromosome"/>
</dbReference>
<dbReference type="GO" id="GO:0005737">
    <property type="term" value="C:cytoplasm"/>
    <property type="evidence" value="ECO:0007669"/>
    <property type="project" value="UniProtKB-SubCell"/>
</dbReference>
<dbReference type="GO" id="GO:0004414">
    <property type="term" value="F:homoserine O-acetyltransferase activity"/>
    <property type="evidence" value="ECO:0007669"/>
    <property type="project" value="UniProtKB-UniRule"/>
</dbReference>
<dbReference type="GO" id="GO:0009092">
    <property type="term" value="P:homoserine metabolic process"/>
    <property type="evidence" value="ECO:0007669"/>
    <property type="project" value="TreeGrafter"/>
</dbReference>
<dbReference type="GO" id="GO:0009086">
    <property type="term" value="P:methionine biosynthetic process"/>
    <property type="evidence" value="ECO:0007669"/>
    <property type="project" value="UniProtKB-UniRule"/>
</dbReference>
<dbReference type="Gene3D" id="1.10.1740.110">
    <property type="match status" value="1"/>
</dbReference>
<dbReference type="Gene3D" id="3.40.50.1820">
    <property type="entry name" value="alpha/beta hydrolase"/>
    <property type="match status" value="1"/>
</dbReference>
<dbReference type="HAMAP" id="MF_00296">
    <property type="entry name" value="MetX_acyltransf"/>
    <property type="match status" value="1"/>
</dbReference>
<dbReference type="InterPro" id="IPR000073">
    <property type="entry name" value="AB_hydrolase_1"/>
</dbReference>
<dbReference type="InterPro" id="IPR029058">
    <property type="entry name" value="AB_hydrolase_fold"/>
</dbReference>
<dbReference type="InterPro" id="IPR008220">
    <property type="entry name" value="HAT_MetX-like"/>
</dbReference>
<dbReference type="NCBIfam" id="TIGR01392">
    <property type="entry name" value="homoserO_Ac_trn"/>
    <property type="match status" value="1"/>
</dbReference>
<dbReference type="NCBIfam" id="NF001209">
    <property type="entry name" value="PRK00175.1"/>
    <property type="match status" value="1"/>
</dbReference>
<dbReference type="PANTHER" id="PTHR32268">
    <property type="entry name" value="HOMOSERINE O-ACETYLTRANSFERASE"/>
    <property type="match status" value="1"/>
</dbReference>
<dbReference type="PANTHER" id="PTHR32268:SF11">
    <property type="entry name" value="HOMOSERINE O-ACETYLTRANSFERASE"/>
    <property type="match status" value="1"/>
</dbReference>
<dbReference type="Pfam" id="PF00561">
    <property type="entry name" value="Abhydrolase_1"/>
    <property type="match status" value="1"/>
</dbReference>
<dbReference type="PIRSF" id="PIRSF000443">
    <property type="entry name" value="Homoser_Ac_trans"/>
    <property type="match status" value="1"/>
</dbReference>
<dbReference type="SUPFAM" id="SSF53474">
    <property type="entry name" value="alpha/beta-Hydrolases"/>
    <property type="match status" value="1"/>
</dbReference>
<accession>Q5Z1C4</accession>
<organism>
    <name type="scientific">Nocardia farcinica (strain IFM 10152)</name>
    <dbReference type="NCBI Taxonomy" id="247156"/>
    <lineage>
        <taxon>Bacteria</taxon>
        <taxon>Bacillati</taxon>
        <taxon>Actinomycetota</taxon>
        <taxon>Actinomycetes</taxon>
        <taxon>Mycobacteriales</taxon>
        <taxon>Nocardiaceae</taxon>
        <taxon>Nocardia</taxon>
    </lineage>
</organism>